<evidence type="ECO:0000255" key="1">
    <source>
        <dbReference type="HAMAP-Rule" id="MF_01200"/>
    </source>
</evidence>
<organism>
    <name type="scientific">Staphylococcus aureus (strain USA300)</name>
    <dbReference type="NCBI Taxonomy" id="367830"/>
    <lineage>
        <taxon>Bacteria</taxon>
        <taxon>Bacillati</taxon>
        <taxon>Bacillota</taxon>
        <taxon>Bacilli</taxon>
        <taxon>Bacillales</taxon>
        <taxon>Staphylococcaceae</taxon>
        <taxon>Staphylococcus</taxon>
    </lineage>
</organism>
<comment type="function">
    <text evidence="1">Catalyzes the decarboxylation of orotidine 5'-monophosphate (OMP) to uridine 5'-monophosphate (UMP).</text>
</comment>
<comment type="catalytic activity">
    <reaction evidence="1">
        <text>orotidine 5'-phosphate + H(+) = UMP + CO2</text>
        <dbReference type="Rhea" id="RHEA:11596"/>
        <dbReference type="ChEBI" id="CHEBI:15378"/>
        <dbReference type="ChEBI" id="CHEBI:16526"/>
        <dbReference type="ChEBI" id="CHEBI:57538"/>
        <dbReference type="ChEBI" id="CHEBI:57865"/>
        <dbReference type="EC" id="4.1.1.23"/>
    </reaction>
</comment>
<comment type="pathway">
    <text evidence="1">Pyrimidine metabolism; UMP biosynthesis via de novo pathway; UMP from orotate: step 2/2.</text>
</comment>
<comment type="subunit">
    <text evidence="1">Homodimer.</text>
</comment>
<comment type="similarity">
    <text evidence="1">Belongs to the OMP decarboxylase family. Type 1 subfamily.</text>
</comment>
<accession>Q2FHN4</accession>
<dbReference type="EC" id="4.1.1.23" evidence="1"/>
<dbReference type="EMBL" id="CP000255">
    <property type="protein sequence ID" value="ABD21060.1"/>
    <property type="molecule type" value="Genomic_DNA"/>
</dbReference>
<dbReference type="RefSeq" id="WP_000654061.1">
    <property type="nucleotide sequence ID" value="NZ_CP027476.1"/>
</dbReference>
<dbReference type="SMR" id="Q2FHN4"/>
<dbReference type="KEGG" id="saa:SAUSA300_1097"/>
<dbReference type="HOGENOM" id="CLU_067069_1_1_9"/>
<dbReference type="OMA" id="FWKVGLE"/>
<dbReference type="UniPathway" id="UPA00070">
    <property type="reaction ID" value="UER00120"/>
</dbReference>
<dbReference type="Proteomes" id="UP000001939">
    <property type="component" value="Chromosome"/>
</dbReference>
<dbReference type="GO" id="GO:0005829">
    <property type="term" value="C:cytosol"/>
    <property type="evidence" value="ECO:0007669"/>
    <property type="project" value="TreeGrafter"/>
</dbReference>
<dbReference type="GO" id="GO:0004590">
    <property type="term" value="F:orotidine-5'-phosphate decarboxylase activity"/>
    <property type="evidence" value="ECO:0007669"/>
    <property type="project" value="UniProtKB-UniRule"/>
</dbReference>
<dbReference type="GO" id="GO:0006207">
    <property type="term" value="P:'de novo' pyrimidine nucleobase biosynthetic process"/>
    <property type="evidence" value="ECO:0007669"/>
    <property type="project" value="InterPro"/>
</dbReference>
<dbReference type="GO" id="GO:0044205">
    <property type="term" value="P:'de novo' UMP biosynthetic process"/>
    <property type="evidence" value="ECO:0007669"/>
    <property type="project" value="UniProtKB-UniRule"/>
</dbReference>
<dbReference type="CDD" id="cd04725">
    <property type="entry name" value="OMP_decarboxylase_like"/>
    <property type="match status" value="1"/>
</dbReference>
<dbReference type="FunFam" id="3.20.20.70:FF:000015">
    <property type="entry name" value="Orotidine 5'-phosphate decarboxylase"/>
    <property type="match status" value="1"/>
</dbReference>
<dbReference type="Gene3D" id="3.20.20.70">
    <property type="entry name" value="Aldolase class I"/>
    <property type="match status" value="1"/>
</dbReference>
<dbReference type="HAMAP" id="MF_01200_B">
    <property type="entry name" value="OMPdecase_type1_B"/>
    <property type="match status" value="1"/>
</dbReference>
<dbReference type="InterPro" id="IPR013785">
    <property type="entry name" value="Aldolase_TIM"/>
</dbReference>
<dbReference type="InterPro" id="IPR014732">
    <property type="entry name" value="OMPdecase"/>
</dbReference>
<dbReference type="InterPro" id="IPR018089">
    <property type="entry name" value="OMPdecase_AS"/>
</dbReference>
<dbReference type="InterPro" id="IPR047596">
    <property type="entry name" value="OMPdecase_bac"/>
</dbReference>
<dbReference type="InterPro" id="IPR001754">
    <property type="entry name" value="OMPdeCOase_dom"/>
</dbReference>
<dbReference type="InterPro" id="IPR011060">
    <property type="entry name" value="RibuloseP-bd_barrel"/>
</dbReference>
<dbReference type="NCBIfam" id="NF001273">
    <property type="entry name" value="PRK00230.1"/>
    <property type="match status" value="1"/>
</dbReference>
<dbReference type="NCBIfam" id="TIGR01740">
    <property type="entry name" value="pyrF"/>
    <property type="match status" value="1"/>
</dbReference>
<dbReference type="PANTHER" id="PTHR32119">
    <property type="entry name" value="OROTIDINE 5'-PHOSPHATE DECARBOXYLASE"/>
    <property type="match status" value="1"/>
</dbReference>
<dbReference type="PANTHER" id="PTHR32119:SF2">
    <property type="entry name" value="OROTIDINE 5'-PHOSPHATE DECARBOXYLASE"/>
    <property type="match status" value="1"/>
</dbReference>
<dbReference type="Pfam" id="PF00215">
    <property type="entry name" value="OMPdecase"/>
    <property type="match status" value="1"/>
</dbReference>
<dbReference type="SMART" id="SM00934">
    <property type="entry name" value="OMPdecase"/>
    <property type="match status" value="1"/>
</dbReference>
<dbReference type="SUPFAM" id="SSF51366">
    <property type="entry name" value="Ribulose-phoshate binding barrel"/>
    <property type="match status" value="1"/>
</dbReference>
<dbReference type="PROSITE" id="PS00156">
    <property type="entry name" value="OMPDECASE"/>
    <property type="match status" value="1"/>
</dbReference>
<protein>
    <recommendedName>
        <fullName evidence="1">Orotidine 5'-phosphate decarboxylase</fullName>
        <ecNumber evidence="1">4.1.1.23</ecNumber>
    </recommendedName>
    <alternativeName>
        <fullName evidence="1">OMP decarboxylase</fullName>
        <shortName evidence="1">OMPDCase</shortName>
        <shortName evidence="1">OMPdecase</shortName>
    </alternativeName>
</protein>
<gene>
    <name evidence="1" type="primary">pyrF</name>
    <name type="ordered locus">SAUSA300_1097</name>
</gene>
<keyword id="KW-0210">Decarboxylase</keyword>
<keyword id="KW-0456">Lyase</keyword>
<keyword id="KW-0665">Pyrimidine biosynthesis</keyword>
<name>PYRF_STAA3</name>
<proteinExistence type="inferred from homology"/>
<feature type="chain" id="PRO_0000241911" description="Orotidine 5'-phosphate decarboxylase">
    <location>
        <begin position="1"/>
        <end position="230"/>
    </location>
</feature>
<feature type="active site" description="Proton donor" evidence="1">
    <location>
        <position position="60"/>
    </location>
</feature>
<feature type="binding site" evidence="1">
    <location>
        <position position="10"/>
    </location>
    <ligand>
        <name>substrate</name>
    </ligand>
</feature>
<feature type="binding site" evidence="1">
    <location>
        <position position="31"/>
    </location>
    <ligand>
        <name>substrate</name>
    </ligand>
</feature>
<feature type="binding site" evidence="1">
    <location>
        <begin position="58"/>
        <end position="67"/>
    </location>
    <ligand>
        <name>substrate</name>
    </ligand>
</feature>
<feature type="binding site" evidence="1">
    <location>
        <position position="117"/>
    </location>
    <ligand>
        <name>substrate</name>
    </ligand>
</feature>
<feature type="binding site" evidence="1">
    <location>
        <position position="179"/>
    </location>
    <ligand>
        <name>substrate</name>
    </ligand>
</feature>
<feature type="binding site" evidence="1">
    <location>
        <position position="188"/>
    </location>
    <ligand>
        <name>substrate</name>
    </ligand>
</feature>
<feature type="binding site" evidence="1">
    <location>
        <position position="208"/>
    </location>
    <ligand>
        <name>substrate</name>
    </ligand>
</feature>
<feature type="binding site" evidence="1">
    <location>
        <position position="209"/>
    </location>
    <ligand>
        <name>substrate</name>
    </ligand>
</feature>
<sequence length="230" mass="25596">MKDLPIIALDFESKEKVNQFLDLFDESLFVKVGMELFYQEGPQLINEIKERGHDVFLDLKLHDIPNTVGKAMEGLAKLNVDLVNVHAAGGVKMMSEAIKGLRKHNQDTKIIAVTQLTSTTEDMLRHEQNIQTSIEEAVLNYAKLANAAGLDGVVCSPLESRMLTEKLGTSFLKVTPGIRPKGASQNDQHRITTPEEARQLGSTHIVVGRPITQSDNPVESYHKIKESWLV</sequence>
<reference key="1">
    <citation type="journal article" date="2006" name="Lancet">
        <title>Complete genome sequence of USA300, an epidemic clone of community-acquired meticillin-resistant Staphylococcus aureus.</title>
        <authorList>
            <person name="Diep B.A."/>
            <person name="Gill S.R."/>
            <person name="Chang R.F."/>
            <person name="Phan T.H."/>
            <person name="Chen J.H."/>
            <person name="Davidson M.G."/>
            <person name="Lin F."/>
            <person name="Lin J."/>
            <person name="Carleton H.A."/>
            <person name="Mongodin E.F."/>
            <person name="Sensabaugh G.F."/>
            <person name="Perdreau-Remington F."/>
        </authorList>
    </citation>
    <scope>NUCLEOTIDE SEQUENCE [LARGE SCALE GENOMIC DNA]</scope>
    <source>
        <strain>USA300</strain>
    </source>
</reference>